<sequence length="289" mass="31000">MLTRIVLFAITNIAVLILASIVMSLLGVNPTQMSGLLVMALILGFGGSLISLLMSKAIAKHTTGAYVIEQPRNPSQRWLLDTVRRQAEIVGIGMPEVAIYEGPEINAFATGADRNNALVAVSTGLLQNMSQDEAEAVLGHEIAHVANGDMVTMALLQGVLNTFVIVLARVVGGFIDSLLSGNRGGGRGVAYYGIVLVLELLFGLFATIITMWFSRRREFRADEGGAYLAGRNKMIAALERLGINHGQSTLPTQVQAFGIYGGIGEGLRKLFLSHPPLSERIAALRMARE</sequence>
<dbReference type="EC" id="3.4.24.-" evidence="1"/>
<dbReference type="EMBL" id="CP001011">
    <property type="protein sequence ID" value="ACB93498.1"/>
    <property type="molecule type" value="Genomic_DNA"/>
</dbReference>
<dbReference type="RefSeq" id="WP_004087571.1">
    <property type="nucleotide sequence ID" value="NC_010577.1"/>
</dbReference>
<dbReference type="SMR" id="B2IA62"/>
<dbReference type="MEROPS" id="M48.002"/>
<dbReference type="GeneID" id="93905856"/>
<dbReference type="KEGG" id="xfn:XfasM23_2100"/>
<dbReference type="HOGENOM" id="CLU_042266_1_0_6"/>
<dbReference type="Proteomes" id="UP000001698">
    <property type="component" value="Chromosome"/>
</dbReference>
<dbReference type="GO" id="GO:0005886">
    <property type="term" value="C:plasma membrane"/>
    <property type="evidence" value="ECO:0007669"/>
    <property type="project" value="UniProtKB-SubCell"/>
</dbReference>
<dbReference type="GO" id="GO:0004222">
    <property type="term" value="F:metalloendopeptidase activity"/>
    <property type="evidence" value="ECO:0007669"/>
    <property type="project" value="UniProtKB-UniRule"/>
</dbReference>
<dbReference type="GO" id="GO:0008270">
    <property type="term" value="F:zinc ion binding"/>
    <property type="evidence" value="ECO:0007669"/>
    <property type="project" value="UniProtKB-UniRule"/>
</dbReference>
<dbReference type="GO" id="GO:0006508">
    <property type="term" value="P:proteolysis"/>
    <property type="evidence" value="ECO:0007669"/>
    <property type="project" value="UniProtKB-KW"/>
</dbReference>
<dbReference type="CDD" id="cd07335">
    <property type="entry name" value="M48B_HtpX_like"/>
    <property type="match status" value="1"/>
</dbReference>
<dbReference type="Gene3D" id="3.30.2010.10">
    <property type="entry name" value="Metalloproteases ('zincins'), catalytic domain"/>
    <property type="match status" value="1"/>
</dbReference>
<dbReference type="HAMAP" id="MF_00188">
    <property type="entry name" value="Pept_M48_protease_HtpX"/>
    <property type="match status" value="1"/>
</dbReference>
<dbReference type="InterPro" id="IPR050083">
    <property type="entry name" value="HtpX_protease"/>
</dbReference>
<dbReference type="InterPro" id="IPR022919">
    <property type="entry name" value="Pept_M48_protease_HtpX"/>
</dbReference>
<dbReference type="InterPro" id="IPR001915">
    <property type="entry name" value="Peptidase_M48"/>
</dbReference>
<dbReference type="NCBIfam" id="NF003965">
    <property type="entry name" value="PRK05457.1"/>
    <property type="match status" value="1"/>
</dbReference>
<dbReference type="PANTHER" id="PTHR43221">
    <property type="entry name" value="PROTEASE HTPX"/>
    <property type="match status" value="1"/>
</dbReference>
<dbReference type="PANTHER" id="PTHR43221:SF1">
    <property type="entry name" value="PROTEASE HTPX"/>
    <property type="match status" value="1"/>
</dbReference>
<dbReference type="Pfam" id="PF01435">
    <property type="entry name" value="Peptidase_M48"/>
    <property type="match status" value="1"/>
</dbReference>
<name>HTPX_XYLF2</name>
<reference key="1">
    <citation type="journal article" date="2010" name="J. Bacteriol.">
        <title>Whole genome sequences of two Xylella fastidiosa strains (M12 and M23) causing almond leaf scorch disease in California.</title>
        <authorList>
            <person name="Chen J."/>
            <person name="Xie G."/>
            <person name="Han S."/>
            <person name="Chertkov O."/>
            <person name="Sims D."/>
            <person name="Civerolo E.L."/>
        </authorList>
    </citation>
    <scope>NUCLEOTIDE SEQUENCE [LARGE SCALE GENOMIC DNA]</scope>
    <source>
        <strain>M23</strain>
    </source>
</reference>
<proteinExistence type="inferred from homology"/>
<gene>
    <name evidence="1" type="primary">htpX</name>
    <name type="ordered locus">XfasM23_2100</name>
</gene>
<feature type="chain" id="PRO_1000098861" description="Protease HtpX">
    <location>
        <begin position="1"/>
        <end position="289"/>
    </location>
</feature>
<feature type="transmembrane region" description="Helical" evidence="1">
    <location>
        <begin position="5"/>
        <end position="25"/>
    </location>
</feature>
<feature type="transmembrane region" description="Helical" evidence="1">
    <location>
        <begin position="33"/>
        <end position="53"/>
    </location>
</feature>
<feature type="transmembrane region" description="Helical" evidence="1">
    <location>
        <begin position="155"/>
        <end position="175"/>
    </location>
</feature>
<feature type="transmembrane region" description="Helical" evidence="1">
    <location>
        <begin position="193"/>
        <end position="213"/>
    </location>
</feature>
<feature type="active site" evidence="1">
    <location>
        <position position="141"/>
    </location>
</feature>
<feature type="binding site" evidence="1">
    <location>
        <position position="140"/>
    </location>
    <ligand>
        <name>Zn(2+)</name>
        <dbReference type="ChEBI" id="CHEBI:29105"/>
        <note>catalytic</note>
    </ligand>
</feature>
<feature type="binding site" evidence="1">
    <location>
        <position position="144"/>
    </location>
    <ligand>
        <name>Zn(2+)</name>
        <dbReference type="ChEBI" id="CHEBI:29105"/>
        <note>catalytic</note>
    </ligand>
</feature>
<feature type="binding site" evidence="1">
    <location>
        <position position="218"/>
    </location>
    <ligand>
        <name>Zn(2+)</name>
        <dbReference type="ChEBI" id="CHEBI:29105"/>
        <note>catalytic</note>
    </ligand>
</feature>
<keyword id="KW-0997">Cell inner membrane</keyword>
<keyword id="KW-1003">Cell membrane</keyword>
<keyword id="KW-0378">Hydrolase</keyword>
<keyword id="KW-0472">Membrane</keyword>
<keyword id="KW-0479">Metal-binding</keyword>
<keyword id="KW-0482">Metalloprotease</keyword>
<keyword id="KW-0645">Protease</keyword>
<keyword id="KW-0812">Transmembrane</keyword>
<keyword id="KW-1133">Transmembrane helix</keyword>
<keyword id="KW-0862">Zinc</keyword>
<accession>B2IA62</accession>
<evidence type="ECO:0000255" key="1">
    <source>
        <dbReference type="HAMAP-Rule" id="MF_00188"/>
    </source>
</evidence>
<protein>
    <recommendedName>
        <fullName evidence="1">Protease HtpX</fullName>
        <ecNumber evidence="1">3.4.24.-</ecNumber>
    </recommendedName>
    <alternativeName>
        <fullName evidence="1">Heat shock protein HtpX</fullName>
    </alternativeName>
</protein>
<comment type="cofactor">
    <cofactor evidence="1">
        <name>Zn(2+)</name>
        <dbReference type="ChEBI" id="CHEBI:29105"/>
    </cofactor>
    <text evidence="1">Binds 1 zinc ion per subunit.</text>
</comment>
<comment type="subcellular location">
    <subcellularLocation>
        <location evidence="1">Cell inner membrane</location>
        <topology evidence="1">Multi-pass membrane protein</topology>
    </subcellularLocation>
</comment>
<comment type="similarity">
    <text evidence="1">Belongs to the peptidase M48B family.</text>
</comment>
<organism>
    <name type="scientific">Xylella fastidiosa (strain M23)</name>
    <dbReference type="NCBI Taxonomy" id="405441"/>
    <lineage>
        <taxon>Bacteria</taxon>
        <taxon>Pseudomonadati</taxon>
        <taxon>Pseudomonadota</taxon>
        <taxon>Gammaproteobacteria</taxon>
        <taxon>Lysobacterales</taxon>
        <taxon>Lysobacteraceae</taxon>
        <taxon>Xylella</taxon>
    </lineage>
</organism>